<evidence type="ECO:0000255" key="1">
    <source>
        <dbReference type="HAMAP-Rule" id="MF_01174"/>
    </source>
</evidence>
<gene>
    <name evidence="1" type="primary">astD</name>
    <name type="ordered locus">ECED1_1948</name>
</gene>
<reference key="1">
    <citation type="journal article" date="2009" name="PLoS Genet.">
        <title>Organised genome dynamics in the Escherichia coli species results in highly diverse adaptive paths.</title>
        <authorList>
            <person name="Touchon M."/>
            <person name="Hoede C."/>
            <person name="Tenaillon O."/>
            <person name="Barbe V."/>
            <person name="Baeriswyl S."/>
            <person name="Bidet P."/>
            <person name="Bingen E."/>
            <person name="Bonacorsi S."/>
            <person name="Bouchier C."/>
            <person name="Bouvet O."/>
            <person name="Calteau A."/>
            <person name="Chiapello H."/>
            <person name="Clermont O."/>
            <person name="Cruveiller S."/>
            <person name="Danchin A."/>
            <person name="Diard M."/>
            <person name="Dossat C."/>
            <person name="Karoui M.E."/>
            <person name="Frapy E."/>
            <person name="Garry L."/>
            <person name="Ghigo J.M."/>
            <person name="Gilles A.M."/>
            <person name="Johnson J."/>
            <person name="Le Bouguenec C."/>
            <person name="Lescat M."/>
            <person name="Mangenot S."/>
            <person name="Martinez-Jehanne V."/>
            <person name="Matic I."/>
            <person name="Nassif X."/>
            <person name="Oztas S."/>
            <person name="Petit M.A."/>
            <person name="Pichon C."/>
            <person name="Rouy Z."/>
            <person name="Ruf C.S."/>
            <person name="Schneider D."/>
            <person name="Tourret J."/>
            <person name="Vacherie B."/>
            <person name="Vallenet D."/>
            <person name="Medigue C."/>
            <person name="Rocha E.P.C."/>
            <person name="Denamur E."/>
        </authorList>
    </citation>
    <scope>NUCLEOTIDE SEQUENCE [LARGE SCALE GENOMIC DNA]</scope>
    <source>
        <strain>ED1a</strain>
    </source>
</reference>
<protein>
    <recommendedName>
        <fullName evidence="1">N-succinylglutamate 5-semialdehyde dehydrogenase</fullName>
        <ecNumber evidence="1">1.2.1.71</ecNumber>
    </recommendedName>
    <alternativeName>
        <fullName evidence="1">Succinylglutamic semialdehyde dehydrogenase</fullName>
        <shortName evidence="1">SGSD</shortName>
    </alternativeName>
</protein>
<keyword id="KW-0056">Arginine metabolism</keyword>
<keyword id="KW-0520">NAD</keyword>
<keyword id="KW-0560">Oxidoreductase</keyword>
<accession>B7MVM5</accession>
<feature type="chain" id="PRO_1000164404" description="N-succinylglutamate 5-semialdehyde dehydrogenase">
    <location>
        <begin position="1"/>
        <end position="492"/>
    </location>
</feature>
<feature type="active site" evidence="1">
    <location>
        <position position="243"/>
    </location>
</feature>
<feature type="active site" evidence="1">
    <location>
        <position position="277"/>
    </location>
</feature>
<feature type="binding site" evidence="1">
    <location>
        <begin position="220"/>
        <end position="225"/>
    </location>
    <ligand>
        <name>NAD(+)</name>
        <dbReference type="ChEBI" id="CHEBI:57540"/>
    </ligand>
</feature>
<proteinExistence type="inferred from homology"/>
<dbReference type="EC" id="1.2.1.71" evidence="1"/>
<dbReference type="EMBL" id="CU928162">
    <property type="protein sequence ID" value="CAR08141.2"/>
    <property type="molecule type" value="Genomic_DNA"/>
</dbReference>
<dbReference type="RefSeq" id="WP_000177318.1">
    <property type="nucleotide sequence ID" value="NC_011745.1"/>
</dbReference>
<dbReference type="SMR" id="B7MVM5"/>
<dbReference type="KEGG" id="ecq:ECED1_1948"/>
<dbReference type="HOGENOM" id="CLU_005391_1_0_6"/>
<dbReference type="UniPathway" id="UPA00185">
    <property type="reaction ID" value="UER00282"/>
</dbReference>
<dbReference type="Proteomes" id="UP000000748">
    <property type="component" value="Chromosome"/>
</dbReference>
<dbReference type="GO" id="GO:0004030">
    <property type="term" value="F:aldehyde dehydrogenase [NAD(P)+] activity"/>
    <property type="evidence" value="ECO:0007669"/>
    <property type="project" value="UniProtKB-ARBA"/>
</dbReference>
<dbReference type="GO" id="GO:0043824">
    <property type="term" value="F:succinylglutamate-semialdehyde dehydrogenase activity"/>
    <property type="evidence" value="ECO:0007669"/>
    <property type="project" value="UniProtKB-EC"/>
</dbReference>
<dbReference type="GO" id="GO:0019544">
    <property type="term" value="P:arginine catabolic process to glutamate"/>
    <property type="evidence" value="ECO:0007669"/>
    <property type="project" value="UniProtKB-UniRule"/>
</dbReference>
<dbReference type="GO" id="GO:0019545">
    <property type="term" value="P:arginine catabolic process to succinate"/>
    <property type="evidence" value="ECO:0007669"/>
    <property type="project" value="UniProtKB-UniRule"/>
</dbReference>
<dbReference type="CDD" id="cd07095">
    <property type="entry name" value="ALDH_SGSD_AstD"/>
    <property type="match status" value="1"/>
</dbReference>
<dbReference type="FunFam" id="3.40.309.10:FF:000013">
    <property type="entry name" value="N-succinylglutamate 5-semialdehyde dehydrogenase"/>
    <property type="match status" value="1"/>
</dbReference>
<dbReference type="FunFam" id="3.40.605.10:FF:000010">
    <property type="entry name" value="N-succinylglutamate 5-semialdehyde dehydrogenase"/>
    <property type="match status" value="1"/>
</dbReference>
<dbReference type="Gene3D" id="3.40.605.10">
    <property type="entry name" value="Aldehyde Dehydrogenase, Chain A, domain 1"/>
    <property type="match status" value="1"/>
</dbReference>
<dbReference type="Gene3D" id="3.40.309.10">
    <property type="entry name" value="Aldehyde Dehydrogenase, Chain A, domain 2"/>
    <property type="match status" value="1"/>
</dbReference>
<dbReference type="HAMAP" id="MF_01174">
    <property type="entry name" value="Aldedh_AstD"/>
    <property type="match status" value="1"/>
</dbReference>
<dbReference type="InterPro" id="IPR016161">
    <property type="entry name" value="Ald_DH/histidinol_DH"/>
</dbReference>
<dbReference type="InterPro" id="IPR016163">
    <property type="entry name" value="Ald_DH_C"/>
</dbReference>
<dbReference type="InterPro" id="IPR016160">
    <property type="entry name" value="Ald_DH_CS_CYS"/>
</dbReference>
<dbReference type="InterPro" id="IPR029510">
    <property type="entry name" value="Ald_DH_CS_GLU"/>
</dbReference>
<dbReference type="InterPro" id="IPR016162">
    <property type="entry name" value="Ald_DH_N"/>
</dbReference>
<dbReference type="InterPro" id="IPR015590">
    <property type="entry name" value="Aldehyde_DH_dom"/>
</dbReference>
<dbReference type="InterPro" id="IPR017649">
    <property type="entry name" value="SuccinylGlu_semiald_DH_AstD"/>
</dbReference>
<dbReference type="NCBIfam" id="TIGR03240">
    <property type="entry name" value="arg_catab_astD"/>
    <property type="match status" value="1"/>
</dbReference>
<dbReference type="NCBIfam" id="NF006992">
    <property type="entry name" value="PRK09457.1"/>
    <property type="match status" value="1"/>
</dbReference>
<dbReference type="PANTHER" id="PTHR11699">
    <property type="entry name" value="ALDEHYDE DEHYDROGENASE-RELATED"/>
    <property type="match status" value="1"/>
</dbReference>
<dbReference type="Pfam" id="PF00171">
    <property type="entry name" value="Aldedh"/>
    <property type="match status" value="1"/>
</dbReference>
<dbReference type="SUPFAM" id="SSF53720">
    <property type="entry name" value="ALDH-like"/>
    <property type="match status" value="1"/>
</dbReference>
<dbReference type="PROSITE" id="PS00070">
    <property type="entry name" value="ALDEHYDE_DEHYDR_CYS"/>
    <property type="match status" value="1"/>
</dbReference>
<dbReference type="PROSITE" id="PS00687">
    <property type="entry name" value="ALDEHYDE_DEHYDR_GLU"/>
    <property type="match status" value="1"/>
</dbReference>
<organism>
    <name type="scientific">Escherichia coli O81 (strain ED1a)</name>
    <dbReference type="NCBI Taxonomy" id="585397"/>
    <lineage>
        <taxon>Bacteria</taxon>
        <taxon>Pseudomonadati</taxon>
        <taxon>Pseudomonadota</taxon>
        <taxon>Gammaproteobacteria</taxon>
        <taxon>Enterobacterales</taxon>
        <taxon>Enterobacteriaceae</taxon>
        <taxon>Escherichia</taxon>
    </lineage>
</organism>
<comment type="function">
    <text evidence="1">Catalyzes the NAD-dependent reduction of succinylglutamate semialdehyde into succinylglutamate.</text>
</comment>
<comment type="catalytic activity">
    <reaction evidence="1">
        <text>N-succinyl-L-glutamate 5-semialdehyde + NAD(+) + H2O = N-succinyl-L-glutamate + NADH + 2 H(+)</text>
        <dbReference type="Rhea" id="RHEA:10812"/>
        <dbReference type="ChEBI" id="CHEBI:15377"/>
        <dbReference type="ChEBI" id="CHEBI:15378"/>
        <dbReference type="ChEBI" id="CHEBI:57540"/>
        <dbReference type="ChEBI" id="CHEBI:57945"/>
        <dbReference type="ChEBI" id="CHEBI:58520"/>
        <dbReference type="ChEBI" id="CHEBI:58763"/>
        <dbReference type="EC" id="1.2.1.71"/>
    </reaction>
</comment>
<comment type="pathway">
    <text evidence="1">Amino-acid degradation; L-arginine degradation via AST pathway; L-glutamate and succinate from L-arginine: step 4/5.</text>
</comment>
<comment type="similarity">
    <text evidence="1">Belongs to the aldehyde dehydrogenase family. AstD subfamily.</text>
</comment>
<name>ASTD_ECO81</name>
<sequence>MTLWINGDWVTGQGALRVKRNPVSGEVLWQGNDADAAQVGQACRAARAAFPRWARLSFGDRQVRVERFAGLLESNKAELTAIIARETGKPRWEAATEVTAMINKIAISIKAYHVRTGEQRSEMPDGAASLRHRPHGVLAVFGPYNFPGHLPNGHIVPALLAGNTIIFKPSELTPWSGDAVMRLWQQAGLPPGVLNLVQGGRETGQALSALEDLDGLLFTGSANTGYQLHHQLSGQPEKILALEMGGNNPLIIDEVADIDAAVHLTIQSAFVTAGQRCTCARRLFLKSGTQGDAFLARLVAVSQRLTPGTWDDEPQPFIGGLISEQAAQQVVTAWQELEAMGGRTLLAPRLLQAGTSLLTPGIIEMTGVTGLPDEEVFGPLLRVWRYDNFDEAIRMANNTRFGLSCGLVSPEREKFDQLLLEARAGIVNWNKPLTGAASTAPFGGIGASGNHRPSAWYAADYCAWPMASLESDSLTLPATLNPGLDFSDEVVR</sequence>